<protein>
    <recommendedName>
        <fullName evidence="1">Nucleoside diphosphate kinase</fullName>
        <shortName evidence="1">NDK</shortName>
        <shortName evidence="1">NDP kinase</shortName>
        <ecNumber evidence="1">2.7.4.6</ecNumber>
    </recommendedName>
    <alternativeName>
        <fullName evidence="1">Nucleoside-2-P kinase</fullName>
    </alternativeName>
</protein>
<name>NDK_DESRM</name>
<sequence>MERTYLMVKPDGVQRGLIGQIISKFEQKGYKIVGLKMMQISREVAERHYGEHAGKPFFNGLVDFITSGPVVAMVIEGKDVVTTAREMMGATNPLKAAPGTIRATFGVDVGRNIIHGSDSLESAQREIGIFFKSEELIDYDRAIDTWIYE</sequence>
<keyword id="KW-0067">ATP-binding</keyword>
<keyword id="KW-0963">Cytoplasm</keyword>
<keyword id="KW-0418">Kinase</keyword>
<keyword id="KW-0460">Magnesium</keyword>
<keyword id="KW-0479">Metal-binding</keyword>
<keyword id="KW-0546">Nucleotide metabolism</keyword>
<keyword id="KW-0547">Nucleotide-binding</keyword>
<keyword id="KW-0597">Phosphoprotein</keyword>
<keyword id="KW-1185">Reference proteome</keyword>
<keyword id="KW-0808">Transferase</keyword>
<accession>A4J0S4</accession>
<proteinExistence type="inferred from homology"/>
<feature type="chain" id="PRO_1000072361" description="Nucleoside diphosphate kinase">
    <location>
        <begin position="1"/>
        <end position="149"/>
    </location>
</feature>
<feature type="active site" description="Pros-phosphohistidine intermediate" evidence="1">
    <location>
        <position position="115"/>
    </location>
</feature>
<feature type="binding site" evidence="1">
    <location>
        <position position="9"/>
    </location>
    <ligand>
        <name>ATP</name>
        <dbReference type="ChEBI" id="CHEBI:30616"/>
    </ligand>
</feature>
<feature type="binding site" evidence="1">
    <location>
        <position position="57"/>
    </location>
    <ligand>
        <name>ATP</name>
        <dbReference type="ChEBI" id="CHEBI:30616"/>
    </ligand>
</feature>
<feature type="binding site" evidence="1">
    <location>
        <position position="85"/>
    </location>
    <ligand>
        <name>ATP</name>
        <dbReference type="ChEBI" id="CHEBI:30616"/>
    </ligand>
</feature>
<feature type="binding site" evidence="1">
    <location>
        <position position="91"/>
    </location>
    <ligand>
        <name>ATP</name>
        <dbReference type="ChEBI" id="CHEBI:30616"/>
    </ligand>
</feature>
<feature type="binding site" evidence="1">
    <location>
        <position position="102"/>
    </location>
    <ligand>
        <name>ATP</name>
        <dbReference type="ChEBI" id="CHEBI:30616"/>
    </ligand>
</feature>
<feature type="binding site" evidence="1">
    <location>
        <position position="112"/>
    </location>
    <ligand>
        <name>ATP</name>
        <dbReference type="ChEBI" id="CHEBI:30616"/>
    </ligand>
</feature>
<evidence type="ECO:0000255" key="1">
    <source>
        <dbReference type="HAMAP-Rule" id="MF_00451"/>
    </source>
</evidence>
<reference key="1">
    <citation type="submission" date="2007-03" db="EMBL/GenBank/DDBJ databases">
        <title>Complete sequence of Desulfotomaculum reducens MI-1.</title>
        <authorList>
            <consortium name="US DOE Joint Genome Institute"/>
            <person name="Copeland A."/>
            <person name="Lucas S."/>
            <person name="Lapidus A."/>
            <person name="Barry K."/>
            <person name="Detter J.C."/>
            <person name="Glavina del Rio T."/>
            <person name="Hammon N."/>
            <person name="Israni S."/>
            <person name="Dalin E."/>
            <person name="Tice H."/>
            <person name="Pitluck S."/>
            <person name="Sims D."/>
            <person name="Brettin T."/>
            <person name="Bruce D."/>
            <person name="Han C."/>
            <person name="Tapia R."/>
            <person name="Schmutz J."/>
            <person name="Larimer F."/>
            <person name="Land M."/>
            <person name="Hauser L."/>
            <person name="Kyrpides N."/>
            <person name="Kim E."/>
            <person name="Tebo B.M."/>
            <person name="Richardson P."/>
        </authorList>
    </citation>
    <scope>NUCLEOTIDE SEQUENCE [LARGE SCALE GENOMIC DNA]</scope>
    <source>
        <strain>ATCC BAA-1160 / DSM 100696 / MI-1</strain>
    </source>
</reference>
<comment type="function">
    <text evidence="1">Major role in the synthesis of nucleoside triphosphates other than ATP. The ATP gamma phosphate is transferred to the NDP beta phosphate via a ping-pong mechanism, using a phosphorylated active-site intermediate.</text>
</comment>
<comment type="catalytic activity">
    <reaction evidence="1">
        <text>a 2'-deoxyribonucleoside 5'-diphosphate + ATP = a 2'-deoxyribonucleoside 5'-triphosphate + ADP</text>
        <dbReference type="Rhea" id="RHEA:44640"/>
        <dbReference type="ChEBI" id="CHEBI:30616"/>
        <dbReference type="ChEBI" id="CHEBI:61560"/>
        <dbReference type="ChEBI" id="CHEBI:73316"/>
        <dbReference type="ChEBI" id="CHEBI:456216"/>
        <dbReference type="EC" id="2.7.4.6"/>
    </reaction>
</comment>
<comment type="catalytic activity">
    <reaction evidence="1">
        <text>a ribonucleoside 5'-diphosphate + ATP = a ribonucleoside 5'-triphosphate + ADP</text>
        <dbReference type="Rhea" id="RHEA:18113"/>
        <dbReference type="ChEBI" id="CHEBI:30616"/>
        <dbReference type="ChEBI" id="CHEBI:57930"/>
        <dbReference type="ChEBI" id="CHEBI:61557"/>
        <dbReference type="ChEBI" id="CHEBI:456216"/>
        <dbReference type="EC" id="2.7.4.6"/>
    </reaction>
</comment>
<comment type="cofactor">
    <cofactor evidence="1">
        <name>Mg(2+)</name>
        <dbReference type="ChEBI" id="CHEBI:18420"/>
    </cofactor>
</comment>
<comment type="subunit">
    <text evidence="1">Homotetramer.</text>
</comment>
<comment type="subcellular location">
    <subcellularLocation>
        <location evidence="1">Cytoplasm</location>
    </subcellularLocation>
</comment>
<comment type="similarity">
    <text evidence="1">Belongs to the NDK family.</text>
</comment>
<dbReference type="EC" id="2.7.4.6" evidence="1"/>
<dbReference type="EMBL" id="CP000612">
    <property type="protein sequence ID" value="ABO48677.1"/>
    <property type="molecule type" value="Genomic_DNA"/>
</dbReference>
<dbReference type="RefSeq" id="WP_011876521.1">
    <property type="nucleotide sequence ID" value="NC_009253.1"/>
</dbReference>
<dbReference type="SMR" id="A4J0S4"/>
<dbReference type="STRING" id="349161.Dred_0127"/>
<dbReference type="KEGG" id="drm:Dred_0127"/>
<dbReference type="eggNOG" id="COG0105">
    <property type="taxonomic scope" value="Bacteria"/>
</dbReference>
<dbReference type="HOGENOM" id="CLU_060216_6_3_9"/>
<dbReference type="OrthoDB" id="9801161at2"/>
<dbReference type="Proteomes" id="UP000001556">
    <property type="component" value="Chromosome"/>
</dbReference>
<dbReference type="GO" id="GO:0005737">
    <property type="term" value="C:cytoplasm"/>
    <property type="evidence" value="ECO:0007669"/>
    <property type="project" value="UniProtKB-SubCell"/>
</dbReference>
<dbReference type="GO" id="GO:0005524">
    <property type="term" value="F:ATP binding"/>
    <property type="evidence" value="ECO:0007669"/>
    <property type="project" value="UniProtKB-UniRule"/>
</dbReference>
<dbReference type="GO" id="GO:0046872">
    <property type="term" value="F:metal ion binding"/>
    <property type="evidence" value="ECO:0007669"/>
    <property type="project" value="UniProtKB-KW"/>
</dbReference>
<dbReference type="GO" id="GO:0004550">
    <property type="term" value="F:nucleoside diphosphate kinase activity"/>
    <property type="evidence" value="ECO:0007669"/>
    <property type="project" value="UniProtKB-UniRule"/>
</dbReference>
<dbReference type="GO" id="GO:0006241">
    <property type="term" value="P:CTP biosynthetic process"/>
    <property type="evidence" value="ECO:0007669"/>
    <property type="project" value="UniProtKB-UniRule"/>
</dbReference>
<dbReference type="GO" id="GO:0006183">
    <property type="term" value="P:GTP biosynthetic process"/>
    <property type="evidence" value="ECO:0007669"/>
    <property type="project" value="UniProtKB-UniRule"/>
</dbReference>
<dbReference type="GO" id="GO:0006228">
    <property type="term" value="P:UTP biosynthetic process"/>
    <property type="evidence" value="ECO:0007669"/>
    <property type="project" value="UniProtKB-UniRule"/>
</dbReference>
<dbReference type="CDD" id="cd04413">
    <property type="entry name" value="NDPk_I"/>
    <property type="match status" value="1"/>
</dbReference>
<dbReference type="FunFam" id="3.30.70.141:FF:000002">
    <property type="entry name" value="Nucleoside diphosphate kinase"/>
    <property type="match status" value="1"/>
</dbReference>
<dbReference type="Gene3D" id="3.30.70.141">
    <property type="entry name" value="Nucleoside diphosphate kinase-like domain"/>
    <property type="match status" value="1"/>
</dbReference>
<dbReference type="HAMAP" id="MF_00451">
    <property type="entry name" value="NDP_kinase"/>
    <property type="match status" value="1"/>
</dbReference>
<dbReference type="InterPro" id="IPR034907">
    <property type="entry name" value="NDK-like_dom"/>
</dbReference>
<dbReference type="InterPro" id="IPR036850">
    <property type="entry name" value="NDK-like_dom_sf"/>
</dbReference>
<dbReference type="InterPro" id="IPR001564">
    <property type="entry name" value="Nucleoside_diP_kinase"/>
</dbReference>
<dbReference type="InterPro" id="IPR023005">
    <property type="entry name" value="Nucleoside_diP_kinase_AS"/>
</dbReference>
<dbReference type="NCBIfam" id="NF001908">
    <property type="entry name" value="PRK00668.1"/>
    <property type="match status" value="1"/>
</dbReference>
<dbReference type="PANTHER" id="PTHR11349">
    <property type="entry name" value="NUCLEOSIDE DIPHOSPHATE KINASE"/>
    <property type="match status" value="1"/>
</dbReference>
<dbReference type="Pfam" id="PF00334">
    <property type="entry name" value="NDK"/>
    <property type="match status" value="1"/>
</dbReference>
<dbReference type="PRINTS" id="PR01243">
    <property type="entry name" value="NUCDPKINASE"/>
</dbReference>
<dbReference type="SMART" id="SM00562">
    <property type="entry name" value="NDK"/>
    <property type="match status" value="1"/>
</dbReference>
<dbReference type="SUPFAM" id="SSF54919">
    <property type="entry name" value="Nucleoside diphosphate kinase, NDK"/>
    <property type="match status" value="1"/>
</dbReference>
<dbReference type="PROSITE" id="PS00469">
    <property type="entry name" value="NDPK"/>
    <property type="match status" value="1"/>
</dbReference>
<dbReference type="PROSITE" id="PS51374">
    <property type="entry name" value="NDPK_LIKE"/>
    <property type="match status" value="1"/>
</dbReference>
<organism>
    <name type="scientific">Desulforamulus reducens (strain ATCC BAA-1160 / DSM 100696 / MI-1)</name>
    <name type="common">Desulfotomaculum reducens</name>
    <dbReference type="NCBI Taxonomy" id="349161"/>
    <lineage>
        <taxon>Bacteria</taxon>
        <taxon>Bacillati</taxon>
        <taxon>Bacillota</taxon>
        <taxon>Clostridia</taxon>
        <taxon>Eubacteriales</taxon>
        <taxon>Peptococcaceae</taxon>
        <taxon>Desulforamulus</taxon>
    </lineage>
</organism>
<gene>
    <name evidence="1" type="primary">ndk</name>
    <name type="ordered locus">Dred_0127</name>
</gene>